<organism>
    <name type="scientific">Pseudacanthotermes spiniger</name>
    <dbReference type="NCBI Taxonomy" id="115113"/>
    <lineage>
        <taxon>Eukaryota</taxon>
        <taxon>Metazoa</taxon>
        <taxon>Ecdysozoa</taxon>
        <taxon>Arthropoda</taxon>
        <taxon>Hexapoda</taxon>
        <taxon>Insecta</taxon>
        <taxon>Pterygota</taxon>
        <taxon>Neoptera</taxon>
        <taxon>Polyneoptera</taxon>
        <taxon>Dictyoptera</taxon>
        <taxon>Blattodea</taxon>
        <taxon>Blattoidea</taxon>
        <taxon>Termitoidae</taxon>
        <taxon>Termitidae</taxon>
        <taxon>Macrotermitinae</taxon>
        <taxon>Pseudacanthotermes</taxon>
    </lineage>
</organism>
<name>SPING_PSEUS</name>
<protein>
    <recommendedName>
        <fullName>Spinigerin</fullName>
    </recommendedName>
    <component>
        <recommendedName>
            <fullName>Spinigerin N-3</fullName>
        </recommendedName>
    </component>
    <component>
        <recommendedName>
            <fullName>Spinigerin C-4</fullName>
        </recommendedName>
    </component>
</protein>
<sequence length="25" mass="3001">HVDKKVADKVLLLKQLRIMRLLTRL</sequence>
<proteinExistence type="evidence at protein level"/>
<evidence type="ECO:0000269" key="1">
    <source>
    </source>
</evidence>
<evidence type="ECO:0007829" key="2">
    <source>
        <dbReference type="PDB" id="1ZRV"/>
    </source>
</evidence>
<accession>P82357</accession>
<dbReference type="PDB" id="1ZRV">
    <property type="method" value="NMR"/>
    <property type="chains" value="A=1-25"/>
</dbReference>
<dbReference type="PDB" id="1ZRW">
    <property type="method" value="NMR"/>
    <property type="chains" value="A=1-25"/>
</dbReference>
<dbReference type="PDBsum" id="1ZRV"/>
<dbReference type="PDBsum" id="1ZRW"/>
<dbReference type="SMR" id="P82357"/>
<dbReference type="EvolutionaryTrace" id="P82357"/>
<dbReference type="GO" id="GO:0005576">
    <property type="term" value="C:extracellular region"/>
    <property type="evidence" value="ECO:0007669"/>
    <property type="project" value="UniProtKB-SubCell"/>
</dbReference>
<dbReference type="GO" id="GO:0042742">
    <property type="term" value="P:defense response to bacterium"/>
    <property type="evidence" value="ECO:0007669"/>
    <property type="project" value="UniProtKB-KW"/>
</dbReference>
<dbReference type="GO" id="GO:0050832">
    <property type="term" value="P:defense response to fungus"/>
    <property type="evidence" value="ECO:0007669"/>
    <property type="project" value="UniProtKB-KW"/>
</dbReference>
<dbReference type="GO" id="GO:0031640">
    <property type="term" value="P:killing of cells of another organism"/>
    <property type="evidence" value="ECO:0007669"/>
    <property type="project" value="UniProtKB-KW"/>
</dbReference>
<comment type="function">
    <text evidence="1">Active against Gram-positive bacteria B.megaterium and M.luteus, Gram-negative bacteria E.coli SBS363 and D22, K.pneumoniae, S.typhimurium and P.aeruginosa, yeast C.albicans and filamentous fungi F.culmorum, N.crassa, N.hematococca and T.viridae. Inactive against Gram-positive bacteria B.subtilis, S.pyogenes, B.thuringiensis and S.aureus, Gram-negative bacteria E.cloacae and E.carotovora and filamentous fungus B.bassiana.</text>
</comment>
<comment type="subcellular location">
    <subcellularLocation>
        <location>Secreted</location>
    </subcellularLocation>
</comment>
<comment type="induction">
    <text>By bacterial infection.</text>
</comment>
<comment type="mass spectrometry" mass="3001.8" method="MALDI" evidence="1">
    <molecule>Spinigerin</molecule>
</comment>
<keyword id="KW-0002">3D-structure</keyword>
<keyword id="KW-0044">Antibiotic</keyword>
<keyword id="KW-0929">Antimicrobial</keyword>
<keyword id="KW-0903">Direct protein sequencing</keyword>
<keyword id="KW-0295">Fungicide</keyword>
<keyword id="KW-0964">Secreted</keyword>
<feature type="peptide" id="PRO_0000004947" description="Spinigerin">
    <location>
        <begin position="1"/>
        <end position="25"/>
    </location>
</feature>
<feature type="peptide" id="PRO_0000004948" description="Spinigerin C-4">
    <location>
        <begin position="1"/>
        <end position="21"/>
    </location>
</feature>
<feature type="peptide" id="PRO_0000004949" description="Spinigerin N-3">
    <location>
        <begin position="4"/>
        <end position="25"/>
    </location>
</feature>
<feature type="helix" evidence="2">
    <location>
        <begin position="4"/>
        <end position="23"/>
    </location>
</feature>
<reference key="1">
    <citation type="journal article" date="2001" name="J. Biol. Chem.">
        <title>Insect immunity. Constitutive expression of a cysteine-rich antifungal and a linear antibacterial peptide in a termite insect.</title>
        <authorList>
            <person name="Lamberty M."/>
            <person name="Zachary D."/>
            <person name="Lanot R."/>
            <person name="Bordereau C."/>
            <person name="Robert A."/>
            <person name="Hoffmann J.A."/>
            <person name="Bulet P."/>
        </authorList>
    </citation>
    <scope>PROTEIN SEQUENCE</scope>
    <scope>MASS SPECTROMETRY</scope>
    <scope>FUNCTION</scope>
    <source>
        <tissue>Blood</tissue>
        <tissue>Salivary gland</tissue>
    </source>
</reference>
<reference key="2">
    <citation type="journal article" date="2006" name="Biopolymers">
        <title>Solution structures of stomoxyn and spinigerin, two insect antimicrobial peptides with an alpha-helical conformation.</title>
        <authorList>
            <person name="Landon C."/>
            <person name="Meudal H."/>
            <person name="Boulanger N."/>
            <person name="Bulet P."/>
            <person name="Vovelle F."/>
        </authorList>
    </citation>
    <scope>STRUCTURE BY NMR</scope>
</reference>